<dbReference type="EMBL" id="CP000076">
    <property type="protein sequence ID" value="AAY91192.1"/>
    <property type="molecule type" value="Genomic_DNA"/>
</dbReference>
<dbReference type="SMR" id="Q4KFF9"/>
<dbReference type="STRING" id="220664.PFL_1905"/>
<dbReference type="KEGG" id="pfl:PFL_1905"/>
<dbReference type="eggNOG" id="COG0718">
    <property type="taxonomic scope" value="Bacteria"/>
</dbReference>
<dbReference type="HOGENOM" id="CLU_140930_0_0_6"/>
<dbReference type="Proteomes" id="UP000008540">
    <property type="component" value="Chromosome"/>
</dbReference>
<dbReference type="GO" id="GO:0043590">
    <property type="term" value="C:bacterial nucleoid"/>
    <property type="evidence" value="ECO:0007669"/>
    <property type="project" value="UniProtKB-UniRule"/>
</dbReference>
<dbReference type="GO" id="GO:0005829">
    <property type="term" value="C:cytosol"/>
    <property type="evidence" value="ECO:0007669"/>
    <property type="project" value="TreeGrafter"/>
</dbReference>
<dbReference type="GO" id="GO:0003677">
    <property type="term" value="F:DNA binding"/>
    <property type="evidence" value="ECO:0007669"/>
    <property type="project" value="UniProtKB-UniRule"/>
</dbReference>
<dbReference type="FunFam" id="3.30.1310.10:FF:000001">
    <property type="entry name" value="Nucleoid-associated protein YbaB"/>
    <property type="match status" value="1"/>
</dbReference>
<dbReference type="Gene3D" id="3.30.1310.10">
    <property type="entry name" value="Nucleoid-associated protein YbaB-like domain"/>
    <property type="match status" value="1"/>
</dbReference>
<dbReference type="HAMAP" id="MF_00274">
    <property type="entry name" value="DNA_YbaB_EbfC"/>
    <property type="match status" value="1"/>
</dbReference>
<dbReference type="InterPro" id="IPR036894">
    <property type="entry name" value="YbaB-like_sf"/>
</dbReference>
<dbReference type="InterPro" id="IPR004401">
    <property type="entry name" value="YbaB/EbfC"/>
</dbReference>
<dbReference type="NCBIfam" id="TIGR00103">
    <property type="entry name" value="DNA_YbaB_EbfC"/>
    <property type="match status" value="1"/>
</dbReference>
<dbReference type="PANTHER" id="PTHR33449">
    <property type="entry name" value="NUCLEOID-ASSOCIATED PROTEIN YBAB"/>
    <property type="match status" value="1"/>
</dbReference>
<dbReference type="PANTHER" id="PTHR33449:SF1">
    <property type="entry name" value="NUCLEOID-ASSOCIATED PROTEIN YBAB"/>
    <property type="match status" value="1"/>
</dbReference>
<dbReference type="Pfam" id="PF02575">
    <property type="entry name" value="YbaB_DNA_bd"/>
    <property type="match status" value="1"/>
</dbReference>
<dbReference type="PIRSF" id="PIRSF004555">
    <property type="entry name" value="UCP004555"/>
    <property type="match status" value="1"/>
</dbReference>
<dbReference type="SUPFAM" id="SSF82607">
    <property type="entry name" value="YbaB-like"/>
    <property type="match status" value="1"/>
</dbReference>
<accession>Q4KFF9</accession>
<name>Y1905_PSEF5</name>
<reference key="1">
    <citation type="journal article" date="2005" name="Nat. Biotechnol.">
        <title>Complete genome sequence of the plant commensal Pseudomonas fluorescens Pf-5.</title>
        <authorList>
            <person name="Paulsen I.T."/>
            <person name="Press C.M."/>
            <person name="Ravel J."/>
            <person name="Kobayashi D.Y."/>
            <person name="Myers G.S.A."/>
            <person name="Mavrodi D.V."/>
            <person name="DeBoy R.T."/>
            <person name="Seshadri R."/>
            <person name="Ren Q."/>
            <person name="Madupu R."/>
            <person name="Dodson R.J."/>
            <person name="Durkin A.S."/>
            <person name="Brinkac L.M."/>
            <person name="Daugherty S.C."/>
            <person name="Sullivan S.A."/>
            <person name="Rosovitz M.J."/>
            <person name="Gwinn M.L."/>
            <person name="Zhou L."/>
            <person name="Schneider D.J."/>
            <person name="Cartinhour S.W."/>
            <person name="Nelson W.C."/>
            <person name="Weidman J."/>
            <person name="Watkins K."/>
            <person name="Tran K."/>
            <person name="Khouri H."/>
            <person name="Pierson E.A."/>
            <person name="Pierson L.S. III"/>
            <person name="Thomashow L.S."/>
            <person name="Loper J.E."/>
        </authorList>
    </citation>
    <scope>NUCLEOTIDE SEQUENCE [LARGE SCALE GENOMIC DNA]</scope>
    <source>
        <strain>ATCC BAA-477 / NRRL B-23932 / Pf-5</strain>
    </source>
</reference>
<organism>
    <name type="scientific">Pseudomonas fluorescens (strain ATCC BAA-477 / NRRL B-23932 / Pf-5)</name>
    <dbReference type="NCBI Taxonomy" id="220664"/>
    <lineage>
        <taxon>Bacteria</taxon>
        <taxon>Pseudomonadati</taxon>
        <taxon>Pseudomonadota</taxon>
        <taxon>Gammaproteobacteria</taxon>
        <taxon>Pseudomonadales</taxon>
        <taxon>Pseudomonadaceae</taxon>
        <taxon>Pseudomonas</taxon>
    </lineage>
</organism>
<keyword id="KW-0963">Cytoplasm</keyword>
<keyword id="KW-0238">DNA-binding</keyword>
<proteinExistence type="inferred from homology"/>
<protein>
    <recommendedName>
        <fullName evidence="1">Nucleoid-associated protein PFL_1905</fullName>
    </recommendedName>
</protein>
<sequence>MKGGMAGLMKQAQQMQEKMAKMQEELANAEVTGKAGGDMVTVVMTGRHDIKRVSIDPSLLEGVSEDDREVLEDLFAAAVNDAVRKIESNSQEKMSGMTAGMQLPPGMKLPF</sequence>
<feature type="chain" id="PRO_1000071921" description="Nucleoid-associated protein PFL_1905">
    <location>
        <begin position="1"/>
        <end position="111"/>
    </location>
</feature>
<feature type="region of interest" description="Disordered" evidence="2">
    <location>
        <begin position="1"/>
        <end position="20"/>
    </location>
</feature>
<feature type="region of interest" description="Disordered" evidence="2">
    <location>
        <begin position="88"/>
        <end position="111"/>
    </location>
</feature>
<evidence type="ECO:0000255" key="1">
    <source>
        <dbReference type="HAMAP-Rule" id="MF_00274"/>
    </source>
</evidence>
<evidence type="ECO:0000256" key="2">
    <source>
        <dbReference type="SAM" id="MobiDB-lite"/>
    </source>
</evidence>
<gene>
    <name type="ordered locus">PFL_1905</name>
</gene>
<comment type="function">
    <text evidence="1">Binds to DNA and alters its conformation. May be involved in regulation of gene expression, nucleoid organization and DNA protection.</text>
</comment>
<comment type="subunit">
    <text evidence="1">Homodimer.</text>
</comment>
<comment type="subcellular location">
    <subcellularLocation>
        <location evidence="1">Cytoplasm</location>
        <location evidence="1">Nucleoid</location>
    </subcellularLocation>
</comment>
<comment type="similarity">
    <text evidence="1">Belongs to the YbaB/EbfC family.</text>
</comment>